<reference key="1">
    <citation type="journal article" date="1999" name="Genetics">
        <title>Divergence of the hyperthermophilic archaea Pyrococcus furiosus and P. horikoshii inferred from complete genomic sequences.</title>
        <authorList>
            <person name="Maeder D.L."/>
            <person name="Weiss R.B."/>
            <person name="Dunn D.M."/>
            <person name="Cherry J.L."/>
            <person name="Gonzalez J.M."/>
            <person name="DiRuggiero J."/>
            <person name="Robb F.T."/>
        </authorList>
    </citation>
    <scope>NUCLEOTIDE SEQUENCE [LARGE SCALE GENOMIC DNA]</scope>
    <source>
        <strain>ATCC 43587 / DSM 3638 / JCM 8422 / Vc1</strain>
    </source>
</reference>
<reference evidence="4" key="2">
    <citation type="journal article" date="2013" name="Nucleic Acids Res.">
        <title>Promiscuous behaviour of archaeal ribosomal proteins: implications for eukaryotic ribosome evolution.</title>
        <authorList>
            <person name="Armache J.P."/>
            <person name="Anger A.M."/>
            <person name="Marquez V."/>
            <person name="Franckenberg S."/>
            <person name="Frohlich T."/>
            <person name="Villa E."/>
            <person name="Berninghausen O."/>
            <person name="Thomm M."/>
            <person name="Arnold G.J."/>
            <person name="Beckmann R."/>
            <person name="Wilson D.N."/>
        </authorList>
    </citation>
    <scope>STRUCTURE BY ELECTRON MICROSCOPY (6.60 ANGSTROMS) IN THE 70S RIBOSOME</scope>
    <scope>SUBUNIT</scope>
</reference>
<name>RL34_PYRFU</name>
<feature type="chain" id="PRO_0000131853" description="Large ribosomal subunit protein eL34">
    <location>
        <begin position="1"/>
        <end position="89"/>
    </location>
</feature>
<feature type="region of interest" description="Disordered" evidence="2">
    <location>
        <begin position="45"/>
        <end position="71"/>
    </location>
</feature>
<sequence>MKPMYRSRSWRRKYVRTPGGRVVIHFERKKPKIAHCAMCGRPLNGIPRGRPVEMRKLPKTKKRPERPMPHLCPRCMRKVMKEQIRAQLS</sequence>
<keyword id="KW-0002">3D-structure</keyword>
<keyword id="KW-1185">Reference proteome</keyword>
<keyword id="KW-0687">Ribonucleoprotein</keyword>
<keyword id="KW-0689">Ribosomal protein</keyword>
<protein>
    <recommendedName>
        <fullName evidence="1">Large ribosomal subunit protein eL34</fullName>
    </recommendedName>
    <alternativeName>
        <fullName>50S ribosomal protein L34e</fullName>
    </alternativeName>
</protein>
<evidence type="ECO:0000255" key="1">
    <source>
        <dbReference type="HAMAP-Rule" id="MF_00349"/>
    </source>
</evidence>
<evidence type="ECO:0000256" key="2">
    <source>
        <dbReference type="SAM" id="MobiDB-lite"/>
    </source>
</evidence>
<evidence type="ECO:0000269" key="3">
    <source>
    </source>
</evidence>
<evidence type="ECO:0007744" key="4">
    <source>
        <dbReference type="PDB" id="4V6U"/>
    </source>
</evidence>
<proteinExistence type="evidence at protein level"/>
<comment type="subunit">
    <text evidence="3">Part of the 50S ribosomal subunit.</text>
</comment>
<comment type="similarity">
    <text evidence="1">Belongs to the eukaryotic ribosomal protein eL34 family.</text>
</comment>
<dbReference type="EMBL" id="AE009950">
    <property type="protein sequence ID" value="AAL80945.1"/>
    <property type="molecule type" value="Genomic_DNA"/>
</dbReference>
<dbReference type="RefSeq" id="WP_011011950.1">
    <property type="nucleotide sequence ID" value="NZ_CP023154.1"/>
</dbReference>
<dbReference type="PDB" id="4V4N">
    <property type="method" value="EM"/>
    <property type="resolution" value="9.00 A"/>
    <property type="chains" value="d=1-89"/>
</dbReference>
<dbReference type="PDB" id="4V6U">
    <property type="method" value="EM"/>
    <property type="resolution" value="6.60 A"/>
    <property type="chains" value="Bd=1-89"/>
</dbReference>
<dbReference type="PDBsum" id="4V4N"/>
<dbReference type="PDBsum" id="4V6U"/>
<dbReference type="SMR" id="Q8U2L3"/>
<dbReference type="STRING" id="186497.PF0821"/>
<dbReference type="PaxDb" id="186497-PF0821"/>
<dbReference type="KEGG" id="pfu:PF0821"/>
<dbReference type="PATRIC" id="fig|186497.12.peg.869"/>
<dbReference type="eggNOG" id="arCOG04168">
    <property type="taxonomic scope" value="Archaea"/>
</dbReference>
<dbReference type="HOGENOM" id="CLU_118652_2_0_2"/>
<dbReference type="OrthoDB" id="43096at2157"/>
<dbReference type="PhylomeDB" id="Q8U2L3"/>
<dbReference type="Proteomes" id="UP000001013">
    <property type="component" value="Chromosome"/>
</dbReference>
<dbReference type="GO" id="GO:1990904">
    <property type="term" value="C:ribonucleoprotein complex"/>
    <property type="evidence" value="ECO:0007669"/>
    <property type="project" value="UniProtKB-KW"/>
</dbReference>
<dbReference type="GO" id="GO:0005840">
    <property type="term" value="C:ribosome"/>
    <property type="evidence" value="ECO:0007669"/>
    <property type="project" value="UniProtKB-KW"/>
</dbReference>
<dbReference type="GO" id="GO:0003735">
    <property type="term" value="F:structural constituent of ribosome"/>
    <property type="evidence" value="ECO:0007669"/>
    <property type="project" value="InterPro"/>
</dbReference>
<dbReference type="GO" id="GO:0006412">
    <property type="term" value="P:translation"/>
    <property type="evidence" value="ECO:0007669"/>
    <property type="project" value="UniProtKB-UniRule"/>
</dbReference>
<dbReference type="Gene3D" id="6.20.340.10">
    <property type="match status" value="1"/>
</dbReference>
<dbReference type="HAMAP" id="MF_00349">
    <property type="entry name" value="Ribosomal_eL34"/>
    <property type="match status" value="1"/>
</dbReference>
<dbReference type="InterPro" id="IPR008195">
    <property type="entry name" value="Ribosomal_eL34"/>
</dbReference>
<dbReference type="InterPro" id="IPR038562">
    <property type="entry name" value="Ribosomal_eL34_C_sf"/>
</dbReference>
<dbReference type="InterPro" id="IPR018065">
    <property type="entry name" value="Ribosomal_eL34_CS"/>
</dbReference>
<dbReference type="InterPro" id="IPR047868">
    <property type="entry name" value="Ribosomal_L34e_arc-type"/>
</dbReference>
<dbReference type="NCBIfam" id="NF003143">
    <property type="entry name" value="PRK04059.1"/>
    <property type="match status" value="1"/>
</dbReference>
<dbReference type="PANTHER" id="PTHR10759">
    <property type="entry name" value="60S RIBOSOMAL PROTEIN L34"/>
    <property type="match status" value="1"/>
</dbReference>
<dbReference type="Pfam" id="PF01199">
    <property type="entry name" value="Ribosomal_L34e"/>
    <property type="match status" value="1"/>
</dbReference>
<dbReference type="PRINTS" id="PR01250">
    <property type="entry name" value="RIBOSOMALL34"/>
</dbReference>
<dbReference type="PROSITE" id="PS01145">
    <property type="entry name" value="RIBOSOMAL_L34E"/>
    <property type="match status" value="1"/>
</dbReference>
<accession>Q8U2L3</accession>
<gene>
    <name evidence="1" type="primary">rpl34e</name>
    <name type="ordered locus">PF0821</name>
</gene>
<organism>
    <name type="scientific">Pyrococcus furiosus (strain ATCC 43587 / DSM 3638 / JCM 8422 / Vc1)</name>
    <dbReference type="NCBI Taxonomy" id="186497"/>
    <lineage>
        <taxon>Archaea</taxon>
        <taxon>Methanobacteriati</taxon>
        <taxon>Methanobacteriota</taxon>
        <taxon>Thermococci</taxon>
        <taxon>Thermococcales</taxon>
        <taxon>Thermococcaceae</taxon>
        <taxon>Pyrococcus</taxon>
    </lineage>
</organism>